<gene>
    <name evidence="11" type="primary">GNBP1</name>
    <name type="ORF">CG6895</name>
</gene>
<name>GNBP1_DROME</name>
<organism>
    <name type="scientific">Drosophila melanogaster</name>
    <name type="common">Fruit fly</name>
    <dbReference type="NCBI Taxonomy" id="7227"/>
    <lineage>
        <taxon>Eukaryota</taxon>
        <taxon>Metazoa</taxon>
        <taxon>Ecdysozoa</taxon>
        <taxon>Arthropoda</taxon>
        <taxon>Hexapoda</taxon>
        <taxon>Insecta</taxon>
        <taxon>Pterygota</taxon>
        <taxon>Neoptera</taxon>
        <taxon>Endopterygota</taxon>
        <taxon>Diptera</taxon>
        <taxon>Brachycera</taxon>
        <taxon>Muscomorpha</taxon>
        <taxon>Ephydroidea</taxon>
        <taxon>Drosophilidae</taxon>
        <taxon>Drosophila</taxon>
        <taxon>Sophophora</taxon>
    </lineage>
</organism>
<accession>Q9NHB0</accession>
<accession>Q9VVR5</accession>
<protein>
    <recommendedName>
        <fullName>Gram-negative bacteria-binding protein 1</fullName>
    </recommendedName>
</protein>
<feature type="signal peptide" evidence="1">
    <location>
        <begin position="1"/>
        <end position="19"/>
    </location>
</feature>
<feature type="chain" id="PRO_0000002817" description="Gram-negative bacteria-binding protein 1">
    <location>
        <begin position="20"/>
        <end position="494"/>
    </location>
</feature>
<feature type="domain" description="CBM39" evidence="3">
    <location>
        <begin position="20"/>
        <end position="120"/>
    </location>
</feature>
<feature type="domain" description="GH16" evidence="2">
    <location>
        <begin position="135"/>
        <end position="494"/>
    </location>
</feature>
<feature type="region of interest" description="Disordered" evidence="4">
    <location>
        <begin position="126"/>
        <end position="160"/>
    </location>
</feature>
<feature type="glycosylation site" description="N-linked (GlcNAc...) asparagine" evidence="1">
    <location>
        <position position="56"/>
    </location>
</feature>
<feature type="glycosylation site" description="N-linked (GlcNAc...) asparagine" evidence="1">
    <location>
        <position position="81"/>
    </location>
</feature>
<feature type="glycosylation site" description="N-linked (GlcNAc...) asparagine" evidence="1">
    <location>
        <position position="185"/>
    </location>
</feature>
<feature type="sequence conflict" description="In Ref. 1; AAF33849." evidence="8" ref="1">
    <original>P</original>
    <variation>R</variation>
    <location>
        <position position="230"/>
    </location>
</feature>
<sequence>MPGLCIGILLLIGFGCTTAYKIPTPTVELLETGFSVSIPDEEGVKVVAFNVNRNRNFTSFINEGQYNVRLTEPQNGRWTTNFSSVPLRSQDVLYLWTSVQHQKAVYQDLAQPLPVCNLGGEYRPRGCSPGDDDFTDDNQLSTEDSALEPTAPSVCEPSESQVSPQIGVSICKGQLLFEETFDQLNESLWIHDVRLPLDSKDAEFVLYDGKAKVHDGNLVIEPLLWSSYRPDLSIANSRLDLSERCTGTHNRIKECILHSTGSGPSGIMPPIVTPRISTKETFAFQYGRIEIRAKLPKGDWIVPLLLLEPLTEWYGQSGYESGQLRVALARGNSVLRMPRGKLVDGRSLYGGPVLSTDAHQREDLWLSKRKISHFGDDFHTYSLDWSSNRLLFSVDGQVYGEMLNGFTELDENPRWKQGGPMAPFDKMFYISLGVSVGGFGDFVDHLRTATYEKPWANYHPQAKLQFHQAQDQWLPTWKQPALKIDYVRVFATDN</sequence>
<comment type="function">
    <text evidence="6 7">Plays a key role in innate immunity by acting as a pattern recognition receptor for beta-1,3-glucan from fungi and lipopolysaccharide from Gram-negative bacteria (PubMed:10827089). Upon recognition of invading microorganism-derived products, acts upstream of protease spz processing enzyme SPE to activate the Toll pathway and to induce the expression of antimicrobial peptides drosomycin, cecropin and attacin (PubMed:10827089, PubMed:16399077).</text>
</comment>
<comment type="interaction">
    <interactant intactId="EBI-15721168">
        <id>Q9NHB0</id>
    </interactant>
    <interactant intactId="EBI-15721239">
        <id>Q9VYX7</id>
        <label>PGRP-SA</label>
    </interactant>
    <organismsDiffer>false</organismsDiffer>
    <experiments>4</experiments>
</comment>
<comment type="interaction">
    <interactant intactId="EBI-15721168">
        <id>Q9NHB0</id>
    </interactant>
    <interactant intactId="EBI-15721196">
        <id>Q9VS97</id>
        <label>PGRP-SD</label>
    </interactant>
    <organismsDiffer>false</organismsDiffer>
    <experiments>4</experiments>
</comment>
<comment type="subcellular location">
    <subcellularLocation>
        <location evidence="6">Cell membrane</location>
        <topology evidence="6">Lipid-anchor</topology>
        <topology evidence="6">GPI-anchor</topology>
    </subcellularLocation>
    <text>Secreted and attached to the membrane by a GPI-anchor.</text>
</comment>
<comment type="developmental stage">
    <text evidence="6">Expressed at moderate levels throughout the life cycle.</text>
</comment>
<comment type="similarity">
    <text evidence="8">Belongs to the insect beta-1,3-glucan binding protein family.</text>
</comment>
<comment type="sequence caution" evidence="8">
    <conflict type="frameshift">
        <sequence resource="EMBL-CDS" id="AAF33849"/>
    </conflict>
</comment>
<dbReference type="EMBL" id="AF228472">
    <property type="protein sequence ID" value="AAF33849.1"/>
    <property type="status" value="ALT_FRAME"/>
    <property type="molecule type" value="mRNA"/>
</dbReference>
<dbReference type="EMBL" id="AE014296">
    <property type="protein sequence ID" value="AAF49244.1"/>
    <property type="molecule type" value="Genomic_DNA"/>
</dbReference>
<dbReference type="RefSeq" id="NP_524142.2">
    <property type="nucleotide sequence ID" value="NM_079418.3"/>
</dbReference>
<dbReference type="SMR" id="Q9NHB0"/>
<dbReference type="BioGRID" id="65315">
    <property type="interactions" value="3"/>
</dbReference>
<dbReference type="DIP" id="DIP-60776N"/>
<dbReference type="FunCoup" id="Q9NHB0">
    <property type="interactions" value="84"/>
</dbReference>
<dbReference type="IntAct" id="Q9NHB0">
    <property type="interactions" value="2"/>
</dbReference>
<dbReference type="STRING" id="7227.FBpp0074817"/>
<dbReference type="CAZy" id="CBM39">
    <property type="family name" value="Carbohydrate-Binding Module Family 39"/>
</dbReference>
<dbReference type="CAZy" id="GH16">
    <property type="family name" value="Glycoside Hydrolase Family 16"/>
</dbReference>
<dbReference type="GlyCosmos" id="Q9NHB0">
    <property type="glycosylation" value="3 sites, No reported glycans"/>
</dbReference>
<dbReference type="GlyGen" id="Q9NHB0">
    <property type="glycosylation" value="3 sites"/>
</dbReference>
<dbReference type="PaxDb" id="7227-FBpp0074817"/>
<dbReference type="DNASU" id="40034"/>
<dbReference type="EnsemblMetazoa" id="FBtr0075050">
    <property type="protein sequence ID" value="FBpp0074817"/>
    <property type="gene ID" value="FBgn0040323"/>
</dbReference>
<dbReference type="GeneID" id="40034"/>
<dbReference type="KEGG" id="dme:Dmel_CG6895"/>
<dbReference type="AGR" id="FB:FBgn0040323"/>
<dbReference type="CTD" id="40034"/>
<dbReference type="FlyBase" id="FBgn0040323">
    <property type="gene designation" value="GNBP1"/>
</dbReference>
<dbReference type="VEuPathDB" id="VectorBase:FBgn0040323"/>
<dbReference type="eggNOG" id="ENOG502RY3C">
    <property type="taxonomic scope" value="Eukaryota"/>
</dbReference>
<dbReference type="GeneTree" id="ENSGT00940000173596"/>
<dbReference type="HOGENOM" id="CLU_019533_2_0_1"/>
<dbReference type="InParanoid" id="Q9NHB0"/>
<dbReference type="OrthoDB" id="4781at2759"/>
<dbReference type="PhylomeDB" id="Q9NHB0"/>
<dbReference type="BioGRID-ORCS" id="40034">
    <property type="hits" value="0 hits in 1 CRISPR screen"/>
</dbReference>
<dbReference type="GenomeRNAi" id="40034"/>
<dbReference type="PRO" id="PR:Q9NHB0"/>
<dbReference type="Proteomes" id="UP000000803">
    <property type="component" value="Chromosome 3L"/>
</dbReference>
<dbReference type="Bgee" id="FBgn0040323">
    <property type="expression patterns" value="Expressed in eye disc (Drosophila) and 30 other cell types or tissues"/>
</dbReference>
<dbReference type="ExpressionAtlas" id="Q9NHB0">
    <property type="expression patterns" value="baseline and differential"/>
</dbReference>
<dbReference type="GO" id="GO:0005576">
    <property type="term" value="C:extracellular region"/>
    <property type="evidence" value="ECO:0000314"/>
    <property type="project" value="UniProtKB"/>
</dbReference>
<dbReference type="GO" id="GO:0005615">
    <property type="term" value="C:extracellular space"/>
    <property type="evidence" value="ECO:0000314"/>
    <property type="project" value="FlyBase"/>
</dbReference>
<dbReference type="GO" id="GO:0005886">
    <property type="term" value="C:plasma membrane"/>
    <property type="evidence" value="ECO:0000314"/>
    <property type="project" value="FlyBase"/>
</dbReference>
<dbReference type="GO" id="GO:0098552">
    <property type="term" value="C:side of membrane"/>
    <property type="evidence" value="ECO:0007669"/>
    <property type="project" value="UniProtKB-KW"/>
</dbReference>
<dbReference type="GO" id="GO:0001872">
    <property type="term" value="F:(1-&gt;3)-beta-D-glucan binding"/>
    <property type="evidence" value="ECO:0000314"/>
    <property type="project" value="FlyBase"/>
</dbReference>
<dbReference type="GO" id="GO:0001530">
    <property type="term" value="F:lipopolysaccharide binding"/>
    <property type="evidence" value="ECO:0000314"/>
    <property type="project" value="FlyBase"/>
</dbReference>
<dbReference type="GO" id="GO:0038187">
    <property type="term" value="F:pattern recognition receptor activity"/>
    <property type="evidence" value="ECO:0000314"/>
    <property type="project" value="FlyBase"/>
</dbReference>
<dbReference type="GO" id="GO:0042834">
    <property type="term" value="F:peptidoglycan binding"/>
    <property type="evidence" value="ECO:0000314"/>
    <property type="project" value="FlyBase"/>
</dbReference>
<dbReference type="GO" id="GO:0005975">
    <property type="term" value="P:carbohydrate metabolic process"/>
    <property type="evidence" value="ECO:0007669"/>
    <property type="project" value="InterPro"/>
</dbReference>
<dbReference type="GO" id="GO:0050830">
    <property type="term" value="P:defense response to Gram-positive bacterium"/>
    <property type="evidence" value="ECO:0000315"/>
    <property type="project" value="FlyBase"/>
</dbReference>
<dbReference type="GO" id="GO:0006955">
    <property type="term" value="P:immune response"/>
    <property type="evidence" value="ECO:0000270"/>
    <property type="project" value="FlyBase"/>
</dbReference>
<dbReference type="GO" id="GO:0045087">
    <property type="term" value="P:innate immune response"/>
    <property type="evidence" value="ECO:0007669"/>
    <property type="project" value="UniProtKB-KW"/>
</dbReference>
<dbReference type="GO" id="GO:0002758">
    <property type="term" value="P:innate immune response-activating signaling pathway"/>
    <property type="evidence" value="ECO:0000314"/>
    <property type="project" value="FlyBase"/>
</dbReference>
<dbReference type="GO" id="GO:0002221">
    <property type="term" value="P:pattern recognition receptor signaling pathway"/>
    <property type="evidence" value="ECO:0000314"/>
    <property type="project" value="UniProtKB"/>
</dbReference>
<dbReference type="GO" id="GO:0009253">
    <property type="term" value="P:peptidoglycan catabolic process"/>
    <property type="evidence" value="ECO:0000314"/>
    <property type="project" value="FlyBase"/>
</dbReference>
<dbReference type="GO" id="GO:0045088">
    <property type="term" value="P:regulation of innate immune response"/>
    <property type="evidence" value="ECO:0000314"/>
    <property type="project" value="UniProtKB"/>
</dbReference>
<dbReference type="GO" id="GO:0160032">
    <property type="term" value="P:Toll receptor ligand protein activation cascade"/>
    <property type="evidence" value="ECO:0000315"/>
    <property type="project" value="FlyBase"/>
</dbReference>
<dbReference type="CDD" id="cd02179">
    <property type="entry name" value="GH16_beta_GRP"/>
    <property type="match status" value="1"/>
</dbReference>
<dbReference type="FunFam" id="2.60.120.200:FF:000235">
    <property type="entry name" value="Beta-1,3-glucan-binding protein"/>
    <property type="match status" value="1"/>
</dbReference>
<dbReference type="Gene3D" id="2.60.120.200">
    <property type="match status" value="1"/>
</dbReference>
<dbReference type="Gene3D" id="2.60.40.2140">
    <property type="entry name" value="Beta-1,3-glucan-recognition protein, N-terminal domain"/>
    <property type="match status" value="1"/>
</dbReference>
<dbReference type="InterPro" id="IPR031756">
    <property type="entry name" value="BGBP_N"/>
</dbReference>
<dbReference type="InterPro" id="IPR043030">
    <property type="entry name" value="BGBP_N_sf"/>
</dbReference>
<dbReference type="InterPro" id="IPR013320">
    <property type="entry name" value="ConA-like_dom_sf"/>
</dbReference>
<dbReference type="InterPro" id="IPR000757">
    <property type="entry name" value="GH16"/>
</dbReference>
<dbReference type="InterPro" id="IPR035806">
    <property type="entry name" value="GH16_GRP_C"/>
</dbReference>
<dbReference type="InterPro" id="IPR050546">
    <property type="entry name" value="Glycosyl_Hydrlase_16"/>
</dbReference>
<dbReference type="PANTHER" id="PTHR10963">
    <property type="entry name" value="GLYCOSYL HYDROLASE-RELATED"/>
    <property type="match status" value="1"/>
</dbReference>
<dbReference type="PANTHER" id="PTHR10963:SF60">
    <property type="entry name" value="GRAM-NEGATIVE BACTERIA-BINDING PROTEIN 1-RELATED"/>
    <property type="match status" value="1"/>
</dbReference>
<dbReference type="Pfam" id="PF15886">
    <property type="entry name" value="CBM39"/>
    <property type="match status" value="1"/>
</dbReference>
<dbReference type="SUPFAM" id="SSF49899">
    <property type="entry name" value="Concanavalin A-like lectins/glucanases"/>
    <property type="match status" value="1"/>
</dbReference>
<dbReference type="PROSITE" id="PS51969">
    <property type="entry name" value="CBM39"/>
    <property type="match status" value="1"/>
</dbReference>
<dbReference type="PROSITE" id="PS51762">
    <property type="entry name" value="GH16_2"/>
    <property type="match status" value="1"/>
</dbReference>
<reference evidence="8 9" key="1">
    <citation type="journal article" date="2000" name="J. Biol. Chem.">
        <title>Gram-negative bacteria-binding protein, a pattern recognition receptor for lipopolysaccharide and beta-1,3-glucan that mediates the signaling for the induction of innate immune genes in Drosophila melanogaster cells.</title>
        <authorList>
            <person name="Kim Y.-S."/>
            <person name="Ryu J.-H."/>
            <person name="Han S.-J."/>
            <person name="Choi K.-H."/>
            <person name="Nam K.-B."/>
            <person name="Jang I.-H."/>
            <person name="Lemaitre B."/>
            <person name="Brey P.T."/>
            <person name="Lee W.-J."/>
        </authorList>
    </citation>
    <scope>NUCLEOTIDE SEQUENCE [MRNA]</scope>
    <scope>FUNCTION</scope>
    <scope>SUBCELLULAR LOCATION</scope>
    <scope>DEVELOPMENTAL STAGE</scope>
</reference>
<reference evidence="10" key="2">
    <citation type="journal article" date="2000" name="Science">
        <title>The genome sequence of Drosophila melanogaster.</title>
        <authorList>
            <person name="Adams M.D."/>
            <person name="Celniker S.E."/>
            <person name="Holt R.A."/>
            <person name="Evans C.A."/>
            <person name="Gocayne J.D."/>
            <person name="Amanatides P.G."/>
            <person name="Scherer S.E."/>
            <person name="Li P.W."/>
            <person name="Hoskins R.A."/>
            <person name="Galle R.F."/>
            <person name="George R.A."/>
            <person name="Lewis S.E."/>
            <person name="Richards S."/>
            <person name="Ashburner M."/>
            <person name="Henderson S.N."/>
            <person name="Sutton G.G."/>
            <person name="Wortman J.R."/>
            <person name="Yandell M.D."/>
            <person name="Zhang Q."/>
            <person name="Chen L.X."/>
            <person name="Brandon R.C."/>
            <person name="Rogers Y.-H.C."/>
            <person name="Blazej R.G."/>
            <person name="Champe M."/>
            <person name="Pfeiffer B.D."/>
            <person name="Wan K.H."/>
            <person name="Doyle C."/>
            <person name="Baxter E.G."/>
            <person name="Helt G."/>
            <person name="Nelson C.R."/>
            <person name="Miklos G.L.G."/>
            <person name="Abril J.F."/>
            <person name="Agbayani A."/>
            <person name="An H.-J."/>
            <person name="Andrews-Pfannkoch C."/>
            <person name="Baldwin D."/>
            <person name="Ballew R.M."/>
            <person name="Basu A."/>
            <person name="Baxendale J."/>
            <person name="Bayraktaroglu L."/>
            <person name="Beasley E.M."/>
            <person name="Beeson K.Y."/>
            <person name="Benos P.V."/>
            <person name="Berman B.P."/>
            <person name="Bhandari D."/>
            <person name="Bolshakov S."/>
            <person name="Borkova D."/>
            <person name="Botchan M.R."/>
            <person name="Bouck J."/>
            <person name="Brokstein P."/>
            <person name="Brottier P."/>
            <person name="Burtis K.C."/>
            <person name="Busam D.A."/>
            <person name="Butler H."/>
            <person name="Cadieu E."/>
            <person name="Center A."/>
            <person name="Chandra I."/>
            <person name="Cherry J.M."/>
            <person name="Cawley S."/>
            <person name="Dahlke C."/>
            <person name="Davenport L.B."/>
            <person name="Davies P."/>
            <person name="de Pablos B."/>
            <person name="Delcher A."/>
            <person name="Deng Z."/>
            <person name="Mays A.D."/>
            <person name="Dew I."/>
            <person name="Dietz S.M."/>
            <person name="Dodson K."/>
            <person name="Doup L.E."/>
            <person name="Downes M."/>
            <person name="Dugan-Rocha S."/>
            <person name="Dunkov B.C."/>
            <person name="Dunn P."/>
            <person name="Durbin K.J."/>
            <person name="Evangelista C.C."/>
            <person name="Ferraz C."/>
            <person name="Ferriera S."/>
            <person name="Fleischmann W."/>
            <person name="Fosler C."/>
            <person name="Gabrielian A.E."/>
            <person name="Garg N.S."/>
            <person name="Gelbart W.M."/>
            <person name="Glasser K."/>
            <person name="Glodek A."/>
            <person name="Gong F."/>
            <person name="Gorrell J.H."/>
            <person name="Gu Z."/>
            <person name="Guan P."/>
            <person name="Harris M."/>
            <person name="Harris N.L."/>
            <person name="Harvey D.A."/>
            <person name="Heiman T.J."/>
            <person name="Hernandez J.R."/>
            <person name="Houck J."/>
            <person name="Hostin D."/>
            <person name="Houston K.A."/>
            <person name="Howland T.J."/>
            <person name="Wei M.-H."/>
            <person name="Ibegwam C."/>
            <person name="Jalali M."/>
            <person name="Kalush F."/>
            <person name="Karpen G.H."/>
            <person name="Ke Z."/>
            <person name="Kennison J.A."/>
            <person name="Ketchum K.A."/>
            <person name="Kimmel B.E."/>
            <person name="Kodira C.D."/>
            <person name="Kraft C.L."/>
            <person name="Kravitz S."/>
            <person name="Kulp D."/>
            <person name="Lai Z."/>
            <person name="Lasko P."/>
            <person name="Lei Y."/>
            <person name="Levitsky A.A."/>
            <person name="Li J.H."/>
            <person name="Li Z."/>
            <person name="Liang Y."/>
            <person name="Lin X."/>
            <person name="Liu X."/>
            <person name="Mattei B."/>
            <person name="McIntosh T.C."/>
            <person name="McLeod M.P."/>
            <person name="McPherson D."/>
            <person name="Merkulov G."/>
            <person name="Milshina N.V."/>
            <person name="Mobarry C."/>
            <person name="Morris J."/>
            <person name="Moshrefi A."/>
            <person name="Mount S.M."/>
            <person name="Moy M."/>
            <person name="Murphy B."/>
            <person name="Murphy L."/>
            <person name="Muzny D.M."/>
            <person name="Nelson D.L."/>
            <person name="Nelson D.R."/>
            <person name="Nelson K.A."/>
            <person name="Nixon K."/>
            <person name="Nusskern D.R."/>
            <person name="Pacleb J.M."/>
            <person name="Palazzolo M."/>
            <person name="Pittman G.S."/>
            <person name="Pan S."/>
            <person name="Pollard J."/>
            <person name="Puri V."/>
            <person name="Reese M.G."/>
            <person name="Reinert K."/>
            <person name="Remington K."/>
            <person name="Saunders R.D.C."/>
            <person name="Scheeler F."/>
            <person name="Shen H."/>
            <person name="Shue B.C."/>
            <person name="Siden-Kiamos I."/>
            <person name="Simpson M."/>
            <person name="Skupski M.P."/>
            <person name="Smith T.J."/>
            <person name="Spier E."/>
            <person name="Spradling A.C."/>
            <person name="Stapleton M."/>
            <person name="Strong R."/>
            <person name="Sun E."/>
            <person name="Svirskas R."/>
            <person name="Tector C."/>
            <person name="Turner R."/>
            <person name="Venter E."/>
            <person name="Wang A.H."/>
            <person name="Wang X."/>
            <person name="Wang Z.-Y."/>
            <person name="Wassarman D.A."/>
            <person name="Weinstock G.M."/>
            <person name="Weissenbach J."/>
            <person name="Williams S.M."/>
            <person name="Woodage T."/>
            <person name="Worley K.C."/>
            <person name="Wu D."/>
            <person name="Yang S."/>
            <person name="Yao Q.A."/>
            <person name="Ye J."/>
            <person name="Yeh R.-F."/>
            <person name="Zaveri J.S."/>
            <person name="Zhan M."/>
            <person name="Zhang G."/>
            <person name="Zhao Q."/>
            <person name="Zheng L."/>
            <person name="Zheng X.H."/>
            <person name="Zhong F.N."/>
            <person name="Zhong W."/>
            <person name="Zhou X."/>
            <person name="Zhu S.C."/>
            <person name="Zhu X."/>
            <person name="Smith H.O."/>
            <person name="Gibbs R.A."/>
            <person name="Myers E.W."/>
            <person name="Rubin G.M."/>
            <person name="Venter J.C."/>
        </authorList>
    </citation>
    <scope>NUCLEOTIDE SEQUENCE [LARGE SCALE GENOMIC DNA]</scope>
    <source>
        <strain evidence="5">Berkeley</strain>
    </source>
</reference>
<reference key="3">
    <citation type="journal article" date="2002" name="Genome Biol.">
        <title>Annotation of the Drosophila melanogaster euchromatic genome: a systematic review.</title>
        <authorList>
            <person name="Misra S."/>
            <person name="Crosby M.A."/>
            <person name="Mungall C.J."/>
            <person name="Matthews B.B."/>
            <person name="Campbell K.S."/>
            <person name="Hradecky P."/>
            <person name="Huang Y."/>
            <person name="Kaminker J.S."/>
            <person name="Millburn G.H."/>
            <person name="Prochnik S.E."/>
            <person name="Smith C.D."/>
            <person name="Tupy J.L."/>
            <person name="Whitfield E.J."/>
            <person name="Bayraktaroglu L."/>
            <person name="Berman B.P."/>
            <person name="Bettencourt B.R."/>
            <person name="Celniker S.E."/>
            <person name="de Grey A.D.N.J."/>
            <person name="Drysdale R.A."/>
            <person name="Harris N.L."/>
            <person name="Richter J."/>
            <person name="Russo S."/>
            <person name="Schroeder A.J."/>
            <person name="Shu S.Q."/>
            <person name="Stapleton M."/>
            <person name="Yamada C."/>
            <person name="Ashburner M."/>
            <person name="Gelbart W.M."/>
            <person name="Rubin G.M."/>
            <person name="Lewis S.E."/>
        </authorList>
    </citation>
    <scope>GENOME REANNOTATION</scope>
    <source>
        <strain>Berkeley</strain>
    </source>
</reference>
<reference key="4">
    <citation type="journal article" date="2006" name="Dev. Cell">
        <title>A Spatzle-processing enzyme required for toll signaling activation in Drosophila innate immunity.</title>
        <authorList>
            <person name="Jang I.H."/>
            <person name="Chosa N."/>
            <person name="Kim S.H."/>
            <person name="Nam H.J."/>
            <person name="Lemaitre B."/>
            <person name="Ochiai M."/>
            <person name="Kambris Z."/>
            <person name="Brun S."/>
            <person name="Hashimoto C."/>
            <person name="Ashida M."/>
            <person name="Brey P.T."/>
            <person name="Lee W.J."/>
        </authorList>
    </citation>
    <scope>FUNCTION</scope>
</reference>
<keyword id="KW-1003">Cell membrane</keyword>
<keyword id="KW-0325">Glycoprotein</keyword>
<keyword id="KW-0336">GPI-anchor</keyword>
<keyword id="KW-0391">Immunity</keyword>
<keyword id="KW-0399">Innate immunity</keyword>
<keyword id="KW-0449">Lipoprotein</keyword>
<keyword id="KW-0472">Membrane</keyword>
<keyword id="KW-1185">Reference proteome</keyword>
<keyword id="KW-0732">Signal</keyword>
<proteinExistence type="evidence at protein level"/>
<evidence type="ECO:0000255" key="1"/>
<evidence type="ECO:0000255" key="2">
    <source>
        <dbReference type="PROSITE-ProRule" id="PRU01098"/>
    </source>
</evidence>
<evidence type="ECO:0000255" key="3">
    <source>
        <dbReference type="PROSITE-ProRule" id="PRU01314"/>
    </source>
</evidence>
<evidence type="ECO:0000256" key="4">
    <source>
        <dbReference type="SAM" id="MobiDB-lite"/>
    </source>
</evidence>
<evidence type="ECO:0000269" key="5">
    <source>
    </source>
</evidence>
<evidence type="ECO:0000269" key="6">
    <source>
    </source>
</evidence>
<evidence type="ECO:0000269" key="7">
    <source>
    </source>
</evidence>
<evidence type="ECO:0000305" key="8"/>
<evidence type="ECO:0000312" key="9">
    <source>
        <dbReference type="EMBL" id="AAF33849.1"/>
    </source>
</evidence>
<evidence type="ECO:0000312" key="10">
    <source>
        <dbReference type="EMBL" id="AAF49244.1"/>
    </source>
</evidence>
<evidence type="ECO:0000312" key="11">
    <source>
        <dbReference type="FlyBase" id="FBgn0040323"/>
    </source>
</evidence>